<accession>Q3B5J7</accession>
<feature type="chain" id="PRO_0000269954" description="Macrolide export ATP-binding/permease protein MacB">
    <location>
        <begin position="1"/>
        <end position="664"/>
    </location>
</feature>
<feature type="transmembrane region" description="Helical" evidence="1">
    <location>
        <begin position="283"/>
        <end position="303"/>
    </location>
</feature>
<feature type="transmembrane region" description="Helical" evidence="1">
    <location>
        <begin position="543"/>
        <end position="563"/>
    </location>
</feature>
<feature type="transmembrane region" description="Helical" evidence="1">
    <location>
        <begin position="602"/>
        <end position="622"/>
    </location>
</feature>
<feature type="transmembrane region" description="Helical" evidence="1">
    <location>
        <begin position="627"/>
        <end position="647"/>
    </location>
</feature>
<feature type="domain" description="ABC transporter" evidence="1">
    <location>
        <begin position="8"/>
        <end position="245"/>
    </location>
</feature>
<feature type="binding site" evidence="1">
    <location>
        <begin position="44"/>
        <end position="51"/>
    </location>
    <ligand>
        <name>ATP</name>
        <dbReference type="ChEBI" id="CHEBI:30616"/>
    </ligand>
</feature>
<dbReference type="EC" id="7.6.2.-" evidence="1"/>
<dbReference type="EMBL" id="CP000096">
    <property type="protein sequence ID" value="ABB23384.1"/>
    <property type="status" value="ALT_INIT"/>
    <property type="molecule type" value="Genomic_DNA"/>
</dbReference>
<dbReference type="SMR" id="Q3B5J7"/>
<dbReference type="STRING" id="319225.Plut_0496"/>
<dbReference type="KEGG" id="plt:Plut_0496"/>
<dbReference type="eggNOG" id="COG0577">
    <property type="taxonomic scope" value="Bacteria"/>
</dbReference>
<dbReference type="eggNOG" id="COG1136">
    <property type="taxonomic scope" value="Bacteria"/>
</dbReference>
<dbReference type="HOGENOM" id="CLU_000604_78_2_10"/>
<dbReference type="OrthoDB" id="9769100at2"/>
<dbReference type="Proteomes" id="UP000002709">
    <property type="component" value="Chromosome"/>
</dbReference>
<dbReference type="GO" id="GO:0005886">
    <property type="term" value="C:plasma membrane"/>
    <property type="evidence" value="ECO:0007669"/>
    <property type="project" value="UniProtKB-SubCell"/>
</dbReference>
<dbReference type="GO" id="GO:0005524">
    <property type="term" value="F:ATP binding"/>
    <property type="evidence" value="ECO:0007669"/>
    <property type="project" value="UniProtKB-KW"/>
</dbReference>
<dbReference type="GO" id="GO:0016887">
    <property type="term" value="F:ATP hydrolysis activity"/>
    <property type="evidence" value="ECO:0007669"/>
    <property type="project" value="InterPro"/>
</dbReference>
<dbReference type="GO" id="GO:0022857">
    <property type="term" value="F:transmembrane transporter activity"/>
    <property type="evidence" value="ECO:0007669"/>
    <property type="project" value="TreeGrafter"/>
</dbReference>
<dbReference type="GO" id="GO:0046677">
    <property type="term" value="P:response to antibiotic"/>
    <property type="evidence" value="ECO:0007669"/>
    <property type="project" value="UniProtKB-KW"/>
</dbReference>
<dbReference type="CDD" id="cd03255">
    <property type="entry name" value="ABC_MJ0796_LolCDE_FtsE"/>
    <property type="match status" value="1"/>
</dbReference>
<dbReference type="FunFam" id="3.40.50.300:FF:000032">
    <property type="entry name" value="Export ABC transporter ATP-binding protein"/>
    <property type="match status" value="1"/>
</dbReference>
<dbReference type="Gene3D" id="3.40.50.300">
    <property type="entry name" value="P-loop containing nucleotide triphosphate hydrolases"/>
    <property type="match status" value="1"/>
</dbReference>
<dbReference type="InterPro" id="IPR003593">
    <property type="entry name" value="AAA+_ATPase"/>
</dbReference>
<dbReference type="InterPro" id="IPR003838">
    <property type="entry name" value="ABC3_permease_C"/>
</dbReference>
<dbReference type="InterPro" id="IPR003439">
    <property type="entry name" value="ABC_transporter-like_ATP-bd"/>
</dbReference>
<dbReference type="InterPro" id="IPR017871">
    <property type="entry name" value="ABC_transporter-like_CS"/>
</dbReference>
<dbReference type="InterPro" id="IPR017911">
    <property type="entry name" value="MacB-like_ATP-bd"/>
</dbReference>
<dbReference type="InterPro" id="IPR025857">
    <property type="entry name" value="MacB_PCD"/>
</dbReference>
<dbReference type="InterPro" id="IPR050250">
    <property type="entry name" value="Macrolide_Exporter_MacB"/>
</dbReference>
<dbReference type="InterPro" id="IPR027417">
    <property type="entry name" value="P-loop_NTPase"/>
</dbReference>
<dbReference type="PANTHER" id="PTHR30572:SF4">
    <property type="entry name" value="ABC TRANSPORTER PERMEASE YTRF"/>
    <property type="match status" value="1"/>
</dbReference>
<dbReference type="PANTHER" id="PTHR30572">
    <property type="entry name" value="MEMBRANE COMPONENT OF TRANSPORTER-RELATED"/>
    <property type="match status" value="1"/>
</dbReference>
<dbReference type="Pfam" id="PF00005">
    <property type="entry name" value="ABC_tran"/>
    <property type="match status" value="1"/>
</dbReference>
<dbReference type="Pfam" id="PF02687">
    <property type="entry name" value="FtsX"/>
    <property type="match status" value="1"/>
</dbReference>
<dbReference type="Pfam" id="PF12704">
    <property type="entry name" value="MacB_PCD"/>
    <property type="match status" value="1"/>
</dbReference>
<dbReference type="SMART" id="SM00382">
    <property type="entry name" value="AAA"/>
    <property type="match status" value="1"/>
</dbReference>
<dbReference type="SUPFAM" id="SSF52540">
    <property type="entry name" value="P-loop containing nucleoside triphosphate hydrolases"/>
    <property type="match status" value="1"/>
</dbReference>
<dbReference type="PROSITE" id="PS00211">
    <property type="entry name" value="ABC_TRANSPORTER_1"/>
    <property type="match status" value="1"/>
</dbReference>
<dbReference type="PROSITE" id="PS50893">
    <property type="entry name" value="ABC_TRANSPORTER_2"/>
    <property type="match status" value="1"/>
</dbReference>
<dbReference type="PROSITE" id="PS51267">
    <property type="entry name" value="MACB"/>
    <property type="match status" value="1"/>
</dbReference>
<proteinExistence type="inferred from homology"/>
<reference key="1">
    <citation type="submission" date="2005-08" db="EMBL/GenBank/DDBJ databases">
        <title>Complete sequence of Pelodictyon luteolum DSM 273.</title>
        <authorList>
            <consortium name="US DOE Joint Genome Institute"/>
            <person name="Copeland A."/>
            <person name="Lucas S."/>
            <person name="Lapidus A."/>
            <person name="Barry K."/>
            <person name="Detter J.C."/>
            <person name="Glavina T."/>
            <person name="Hammon N."/>
            <person name="Israni S."/>
            <person name="Pitluck S."/>
            <person name="Bryant D."/>
            <person name="Schmutz J."/>
            <person name="Larimer F."/>
            <person name="Land M."/>
            <person name="Kyrpides N."/>
            <person name="Ivanova N."/>
            <person name="Richardson P."/>
        </authorList>
    </citation>
    <scope>NUCLEOTIDE SEQUENCE [LARGE SCALE GENOMIC DNA]</scope>
    <source>
        <strain>DSM 273 / BCRC 81028 / 2530</strain>
    </source>
</reference>
<name>MACB_CHLL3</name>
<sequence>MAPTTPLLELVDVHRTYPVGESTVNALRGVSLEIREGEFVAIMGSSGSGKSSLLHILGLLDNPDRGEYRILGRNVNALPEDGQAGLRNHVAGFVFQQFHLLKRMSIVDNVRLPHIYSGLKGDFRHEALESLKKVGLMHRLDHTPGQLSGGEQQRVAIARALIGNPMILFADEPTGNLDSRNSLEIMKILEELHREGRTIVMVTHEDEIAAYADRVITMRDGLVVSDQRRDRVCLPAGPSVPLTLDPHAMMDASRNLSVWQDGRFIGFVQQAFQSIFANKVRSLLSVLGILVGVASVIAMMALGEGAKVSIEEELKSMGSNLISVRGGSARVRGAAQGDGAVARFTFKDVKDISRMHSLVKGAAGTVNGSGQIVFGNRNWSTTLDGVGYEYGSMRAFVPSIGRWFTRDEIRKREKVAVIGVTVARELFGNNNPIGHTVKINRINFKVIGIAPAKGFSTHRDQDDVVLVPVTTAMYRVLGRDYLNSIYVEVRSAEGIDGAKEAVSDLIVKNHRLREGDDSFNIRDMTEIQEMLSSTTRTMSMLLGAIAAISLLVGGIGIMNIMLVSVTERTREIGLRKAIGARREDIMLQFLVESVGLTLSGGIIGIIAGIGISALLAVFAGWAVKTSIVSIVLATFFSAITGIFFGLWPARKAAELRPVEALRYE</sequence>
<protein>
    <recommendedName>
        <fullName evidence="1">Macrolide export ATP-binding/permease protein MacB</fullName>
        <ecNumber evidence="1">7.6.2.-</ecNumber>
    </recommendedName>
</protein>
<organism>
    <name type="scientific">Chlorobium luteolum (strain DSM 273 / BCRC 81028 / 2530)</name>
    <name type="common">Pelodictyon luteolum</name>
    <dbReference type="NCBI Taxonomy" id="319225"/>
    <lineage>
        <taxon>Bacteria</taxon>
        <taxon>Pseudomonadati</taxon>
        <taxon>Chlorobiota</taxon>
        <taxon>Chlorobiia</taxon>
        <taxon>Chlorobiales</taxon>
        <taxon>Chlorobiaceae</taxon>
        <taxon>Chlorobium/Pelodictyon group</taxon>
        <taxon>Pelodictyon</taxon>
    </lineage>
</organism>
<evidence type="ECO:0000255" key="1">
    <source>
        <dbReference type="HAMAP-Rule" id="MF_01720"/>
    </source>
</evidence>
<evidence type="ECO:0000305" key="2"/>
<gene>
    <name evidence="1" type="primary">macB</name>
    <name type="ordered locus">Plut_0496</name>
</gene>
<keyword id="KW-0046">Antibiotic resistance</keyword>
<keyword id="KW-0067">ATP-binding</keyword>
<keyword id="KW-0997">Cell inner membrane</keyword>
<keyword id="KW-1003">Cell membrane</keyword>
<keyword id="KW-0472">Membrane</keyword>
<keyword id="KW-0547">Nucleotide-binding</keyword>
<keyword id="KW-1185">Reference proteome</keyword>
<keyword id="KW-1278">Translocase</keyword>
<keyword id="KW-0812">Transmembrane</keyword>
<keyword id="KW-1133">Transmembrane helix</keyword>
<keyword id="KW-0813">Transport</keyword>
<comment type="function">
    <text evidence="1">Non-canonical ABC transporter that contains transmembrane domains (TMD), which form a pore in the inner membrane, and an ATP-binding domain (NBD), which is responsible for energy generation. Confers resistance against macrolides.</text>
</comment>
<comment type="subunit">
    <text evidence="1">Homodimer.</text>
</comment>
<comment type="subcellular location">
    <subcellularLocation>
        <location evidence="1">Cell inner membrane</location>
        <topology evidence="1">Multi-pass membrane protein</topology>
    </subcellularLocation>
</comment>
<comment type="similarity">
    <text evidence="1">Belongs to the ABC transporter superfamily. Macrolide exporter (TC 3.A.1.122) family.</text>
</comment>
<comment type="sequence caution" evidence="2">
    <conflict type="erroneous initiation">
        <sequence resource="EMBL-CDS" id="ABB23384"/>
    </conflict>
    <text>Extended N-terminus.</text>
</comment>